<dbReference type="PDB" id="4U5B">
    <property type="method" value="X-ray"/>
    <property type="resolution" value="3.50 A"/>
    <property type="chains" value="E/F=38-123"/>
</dbReference>
<dbReference type="PDB" id="4U5C">
    <property type="method" value="X-ray"/>
    <property type="resolution" value="3.69 A"/>
    <property type="chains" value="E/F=38-123"/>
</dbReference>
<dbReference type="PDB" id="4U5D">
    <property type="method" value="X-ray"/>
    <property type="resolution" value="3.58 A"/>
    <property type="chains" value="E/F=38-123"/>
</dbReference>
<dbReference type="PDB" id="4U5E">
    <property type="method" value="X-ray"/>
    <property type="resolution" value="3.51 A"/>
    <property type="chains" value="E/F=38-123"/>
</dbReference>
<dbReference type="PDB" id="4U5F">
    <property type="method" value="X-ray"/>
    <property type="resolution" value="3.70 A"/>
    <property type="chains" value="E/F=38-123"/>
</dbReference>
<dbReference type="PDB" id="4U5G">
    <property type="method" value="X-ray"/>
    <property type="resolution" value="2.20 A"/>
    <property type="chains" value="A/B=38-123"/>
</dbReference>
<dbReference type="PDB" id="4U5H">
    <property type="method" value="X-ray"/>
    <property type="resolution" value="1.58 A"/>
    <property type="chains" value="A/B/C/D/E/F/G/H=38-123"/>
</dbReference>
<dbReference type="PDBsum" id="4U5B"/>
<dbReference type="PDBsum" id="4U5C"/>
<dbReference type="PDBsum" id="4U5D"/>
<dbReference type="PDBsum" id="4U5E"/>
<dbReference type="PDBsum" id="4U5F"/>
<dbReference type="PDBsum" id="4U5G"/>
<dbReference type="PDBsum" id="4U5H"/>
<dbReference type="SMR" id="P0CB20"/>
<dbReference type="DIP" id="DIP-61686N"/>
<dbReference type="IntAct" id="P0CB20">
    <property type="interactions" value="1"/>
</dbReference>
<dbReference type="TCDB" id="8.B.40.1.1">
    <property type="family name" value="the conotoxin con-ikot-ikot/conopressin/conophysin/conodipine (ccccc) family"/>
</dbReference>
<dbReference type="ConoServer" id="3890">
    <property type="toxin name" value="Con-ikot-ikot precursor"/>
</dbReference>
<dbReference type="EvolutionaryTrace" id="P0CB20"/>
<dbReference type="GO" id="GO:0005576">
    <property type="term" value="C:extracellular region"/>
    <property type="evidence" value="ECO:0007669"/>
    <property type="project" value="UniProtKB-SubCell"/>
</dbReference>
<dbReference type="GO" id="GO:0035792">
    <property type="term" value="C:host cell postsynaptic membrane"/>
    <property type="evidence" value="ECO:0007669"/>
    <property type="project" value="UniProtKB-KW"/>
</dbReference>
<dbReference type="GO" id="GO:0042802">
    <property type="term" value="F:identical protein binding"/>
    <property type="evidence" value="ECO:0000353"/>
    <property type="project" value="IntAct"/>
</dbReference>
<dbReference type="GO" id="GO:0099106">
    <property type="term" value="F:ion channel regulator activity"/>
    <property type="evidence" value="ECO:0007669"/>
    <property type="project" value="UniProtKB-KW"/>
</dbReference>
<dbReference type="GO" id="GO:0090729">
    <property type="term" value="F:toxin activity"/>
    <property type="evidence" value="ECO:0007669"/>
    <property type="project" value="UniProtKB-KW"/>
</dbReference>
<dbReference type="Gene3D" id="1.20.120.1800">
    <property type="match status" value="1"/>
</dbReference>
<accession>P0CB20</accession>
<proteinExistence type="evidence at protein level"/>
<protein>
    <recommendedName>
        <fullName evidence="4 5 6">Con-ikot-ikot</fullName>
        <shortName evidence="6">CII</shortName>
    </recommendedName>
</protein>
<sequence>MAMNMSMTLCMFVMVVVAATVIDSTQLQEPDLSRMRRSGPADCCRMKECCTDRVNECLQRYSGREDKFVSFCYQEATVTCGSFNEIVGCCYGYQMCMIRVVKPNSLSGAHEACKTVSCGNPCA</sequence>
<reference key="1">
    <citation type="journal article" date="2009" name="Curr. Biol.">
        <title>A novel Conus snail polypeptide causes excitotoxicity by blocking desensitization of AMPA receptors.</title>
        <authorList>
            <person name="Walker C.S."/>
            <person name="Jensen S."/>
            <person name="Ellison M."/>
            <person name="Matta J.A."/>
            <person name="Lee W.Y."/>
            <person name="Imperial J.S."/>
            <person name="Duclos N."/>
            <person name="Brockie P.J."/>
            <person name="Madsen D.M."/>
            <person name="Isaac J.T."/>
            <person name="Olivera B."/>
            <person name="Maricq A.V."/>
        </authorList>
    </citation>
    <scope>NUCLEOTIDE SEQUENCE [MRNA]</scope>
    <scope>PROTEIN SEQUENCE OF 38-64</scope>
    <scope>FUNCTION</scope>
    <scope>SUBCELLULAR LOCATION</scope>
    <scope>MASS SPECTROMETRY</scope>
    <source>
        <tissue>Venom</tissue>
        <tissue>Venom gland</tissue>
    </source>
</reference>
<reference key="2">
    <citation type="journal article" date="2022" name="J. Gen. Physiol.">
        <title>The action of Con-ikot-ikot toxin on single AMPA-type glutamate receptors.</title>
        <authorList>
            <person name="Baranovic J."/>
            <person name="Braunbeck S."/>
            <person name="Zaki N."/>
            <person name="Minniberger S."/>
            <person name="Chebli M."/>
            <person name="Plested A.J.R."/>
        </authorList>
    </citation>
    <scope>FUNCTION</scope>
    <scope>RECOMBINANT EXPRESSION</scope>
</reference>
<reference evidence="9 10 11 12 13 14 15" key="3">
    <citation type="journal article" date="2014" name="Science">
        <title>X-ray structures of AMPA receptor-cone snail toxin complexes illuminate activation mechanism.</title>
        <authorList>
            <person name="Chen L."/>
            <person name="Durr K.L."/>
            <person name="Gouaux E."/>
        </authorList>
    </citation>
    <scope>X-RAY CRYSTALLOGRAPHY (1.58 ANGSTROMS) OF 38-123 IN COMPLEX WITH AMPA RECEPTOR GRIA2; PARTIAL AGONIST KAINATE AND POSITIVE MODULATOR (R,R)-2B COMPLEX</scope>
    <scope>DISULFIDE BONDS</scope>
    <scope>SUBUNIT</scope>
    <scope>FUNCTION</scope>
    <scope>RECOMBINANT EXPRESSION</scope>
</reference>
<feature type="signal peptide" evidence="1">
    <location>
        <begin position="1"/>
        <end position="18"/>
    </location>
</feature>
<feature type="propeptide" id="PRO_0000381162" evidence="2">
    <location>
        <begin position="19"/>
        <end position="37"/>
    </location>
</feature>
<feature type="chain" id="PRO_0000381163" description="Con-ikot-ikot" evidence="8">
    <location>
        <begin position="38"/>
        <end position="123"/>
    </location>
</feature>
<feature type="site" description="Interaction with glutamate receptor 2 (GRIA2)" evidence="3">
    <location>
        <position position="74"/>
    </location>
</feature>
<feature type="site" description="Interaction with glutamate receptor 2 (GRIA2)" evidence="3">
    <location>
        <position position="85"/>
    </location>
</feature>
<feature type="site" description="Interaction with glutamate receptor 2 (GRIA2)" evidence="3">
    <location>
        <position position="112"/>
    </location>
</feature>
<feature type="disulfide bond" description="Interchain" evidence="3 9 10 11 12 13 15">
    <location>
        <position position="43"/>
    </location>
</feature>
<feature type="disulfide bond" description="Interchain" evidence="3 9 10 11 12 13 15">
    <location>
        <position position="44"/>
    </location>
</feature>
<feature type="disulfide bond" evidence="3 9 10 11 12 13 14 15">
    <location>
        <begin position="49"/>
        <end position="80"/>
    </location>
</feature>
<feature type="disulfide bond" evidence="3 9 10 11 12 13 14 15">
    <location>
        <begin position="50"/>
        <end position="89"/>
    </location>
</feature>
<feature type="disulfide bond" evidence="3 9 10 11 12 13 14 15">
    <location>
        <begin position="57"/>
        <end position="72"/>
    </location>
</feature>
<feature type="disulfide bond" evidence="3 9 10 11 12 13 14 15">
    <location>
        <begin position="90"/>
        <end position="118"/>
    </location>
</feature>
<feature type="disulfide bond" evidence="3 9 10 11 12 13 14 15">
    <location>
        <begin position="96"/>
        <end position="113"/>
    </location>
</feature>
<feature type="disulfide bond" description="Interchain" evidence="3 9 10 11 12 13 15">
    <location>
        <position position="122"/>
    </location>
</feature>
<feature type="helix" evidence="16">
    <location>
        <begin position="43"/>
        <end position="58"/>
    </location>
</feature>
<feature type="helix" evidence="16">
    <location>
        <begin position="59"/>
        <end position="61"/>
    </location>
</feature>
<feature type="helix" evidence="16">
    <location>
        <begin position="65"/>
        <end position="80"/>
    </location>
</feature>
<feature type="turn" evidence="16">
    <location>
        <begin position="85"/>
        <end position="87"/>
    </location>
</feature>
<feature type="helix" evidence="16">
    <location>
        <begin position="91"/>
        <end position="100"/>
    </location>
</feature>
<feature type="helix" evidence="16">
    <location>
        <begin position="106"/>
        <end position="113"/>
    </location>
</feature>
<comment type="function">
    <text evidence="2 3">Potently and selectively blocks the desensitization of ionotropic glutamate AMPA receptors (GRIA1, GRIA2, GRIA3 and GRIA4) (PubMed:19481459, PubMed:35377397). Binds to a different site than does the drug cyclothiazide (PubMed:19481459). The toxin acts like a straitjacket on the 'gating ring' of the ligand-binding domain (LBD) of the receptor (PubMed:25103405). It does so by restraining the domains via both intra- and interdimer cross-links such that agonist-induced closure of the LBD 'clamshells' is transduced into an irislike expansion of the gating ring (PubMed:25103405). Compared to other desensitization blockers, it is a poor stabilizer of the open channel because toxin-bound AMPA receptors undergo frequent brief closures (PubMed:35377397). In vitro, application of the toxin to hippocampal slices causes a large and rapid increase in resting AMPA receptor-mediated current leading to neuronal death (PubMed:19481459).</text>
</comment>
<comment type="subunit">
    <text evidence="3">Homodimer; disulfide-linked.</text>
</comment>
<comment type="interaction">
    <interactant intactId="EBI-16116011">
        <id>P0CB20</id>
    </interactant>
    <interactant intactId="EBI-16116011">
        <id>P0CB20</id>
        <label>-</label>
    </interactant>
    <organismsDiffer>false</organismsDiffer>
    <experiments>3</experiments>
</comment>
<comment type="interaction">
    <interactant intactId="EBI-16116011">
        <id>P0CB20</id>
    </interactant>
    <interactant intactId="EBI-15817825">
        <id>P19491-2</id>
        <label>Gria2</label>
    </interactant>
    <organismsDiffer>true</organismsDiffer>
    <experiments>2</experiments>
</comment>
<comment type="subcellular location">
    <subcellularLocation>
        <location evidence="2">Secreted</location>
    </subcellularLocation>
</comment>
<comment type="tissue specificity">
    <text evidence="7">Expressed by the venom duct.</text>
</comment>
<comment type="domain">
    <text evidence="7">The cysteine framework is CC-CC-C-C-C-CC-C-C-C-C.</text>
</comment>
<comment type="mass spectrometry"/>
<comment type="mass spectrometry">
    <text>Dimer.</text>
</comment>
<comment type="miscellaneous">
    <text evidence="8">Ikot-ikot is a Filipino word that translates to 'spinning around' or 'turning around', a reference to the swimming phenotype observed in fish injected with the toxin.</text>
</comment>
<name>CONII_CONST</name>
<organism>
    <name type="scientific">Conus striatus</name>
    <name type="common">Striated cone</name>
    <dbReference type="NCBI Taxonomy" id="6493"/>
    <lineage>
        <taxon>Eukaryota</taxon>
        <taxon>Metazoa</taxon>
        <taxon>Spiralia</taxon>
        <taxon>Lophotrochozoa</taxon>
        <taxon>Mollusca</taxon>
        <taxon>Gastropoda</taxon>
        <taxon>Caenogastropoda</taxon>
        <taxon>Neogastropoda</taxon>
        <taxon>Conoidea</taxon>
        <taxon>Conidae</taxon>
        <taxon>Conus</taxon>
        <taxon>Pionoconus</taxon>
    </lineage>
</organism>
<evidence type="ECO:0000255" key="1"/>
<evidence type="ECO:0000269" key="2">
    <source>
    </source>
</evidence>
<evidence type="ECO:0000269" key="3">
    <source>
    </source>
</evidence>
<evidence type="ECO:0000303" key="4">
    <source>
    </source>
</evidence>
<evidence type="ECO:0000303" key="5">
    <source>
    </source>
</evidence>
<evidence type="ECO:0000303" key="6">
    <source>
    </source>
</evidence>
<evidence type="ECO:0000305" key="7"/>
<evidence type="ECO:0000305" key="8">
    <source>
    </source>
</evidence>
<evidence type="ECO:0007744" key="9">
    <source>
        <dbReference type="PDB" id="4U5B"/>
    </source>
</evidence>
<evidence type="ECO:0007744" key="10">
    <source>
        <dbReference type="PDB" id="4U5C"/>
    </source>
</evidence>
<evidence type="ECO:0007744" key="11">
    <source>
        <dbReference type="PDB" id="4U5D"/>
    </source>
</evidence>
<evidence type="ECO:0007744" key="12">
    <source>
        <dbReference type="PDB" id="4U5E"/>
    </source>
</evidence>
<evidence type="ECO:0007744" key="13">
    <source>
        <dbReference type="PDB" id="4U5F"/>
    </source>
</evidence>
<evidence type="ECO:0007744" key="14">
    <source>
        <dbReference type="PDB" id="4U5G"/>
    </source>
</evidence>
<evidence type="ECO:0007744" key="15">
    <source>
        <dbReference type="PDB" id="4U5H"/>
    </source>
</evidence>
<evidence type="ECO:0007829" key="16">
    <source>
        <dbReference type="PDB" id="4U5H"/>
    </source>
</evidence>
<keyword id="KW-0002">3D-structure</keyword>
<keyword id="KW-0903">Direct protein sequencing</keyword>
<keyword id="KW-1015">Disulfide bond</keyword>
<keyword id="KW-0872">Ion channel impairing toxin</keyword>
<keyword id="KW-1028">Ionotropic glutamate receptor inhibitor</keyword>
<keyword id="KW-0528">Neurotoxin</keyword>
<keyword id="KW-0629">Postsynaptic neurotoxin</keyword>
<keyword id="KW-0964">Secreted</keyword>
<keyword id="KW-0732">Signal</keyword>
<keyword id="KW-0800">Toxin</keyword>